<feature type="signal peptide" evidence="4">
    <location>
        <begin position="1"/>
        <end position="19"/>
    </location>
</feature>
<feature type="chain" id="PRO_0000024898" description="Pectin lyase D">
    <location>
        <begin position="20"/>
        <end position="373"/>
    </location>
</feature>
<feature type="region of interest" description="Disordered" evidence="3">
    <location>
        <begin position="354"/>
        <end position="373"/>
    </location>
</feature>
<feature type="compositionally biased region" description="Low complexity" evidence="3">
    <location>
        <begin position="354"/>
        <end position="366"/>
    </location>
</feature>
<feature type="active site" evidence="2">
    <location>
        <position position="255"/>
    </location>
</feature>
<feature type="glycosylation site" description="N-linked (GlcNAc...) asparagine" evidence="2">
    <location>
        <position position="128"/>
    </location>
</feature>
<feature type="glycosylation site" description="N-linked (GlcNAc...) asparagine" evidence="2">
    <location>
        <position position="274"/>
    </location>
</feature>
<feature type="glycosylation site" description="N-linked (GlcNAc...) asparagine" evidence="2">
    <location>
        <position position="348"/>
    </location>
</feature>
<feature type="disulfide bond" evidence="1">
    <location>
        <begin position="82"/>
        <end position="101"/>
    </location>
</feature>
<feature type="disulfide bond" evidence="1">
    <location>
        <begin position="91"/>
        <end position="225"/>
    </location>
</feature>
<feature type="disulfide bond" evidence="1">
    <location>
        <begin position="321"/>
        <end position="329"/>
    </location>
</feature>
<feature type="sequence conflict" description="In Ref. 1; AA sequence." evidence="5" ref="1">
    <original>V</original>
    <variation>E</variation>
    <location>
        <position position="27"/>
    </location>
</feature>
<name>PELD_ASPNG</name>
<gene>
    <name type="primary">pelD</name>
</gene>
<comment type="function">
    <text evidence="1">Pectinolytic enzymes consist of four classes of enzymes: pectin lyase, polygalacturonase, pectin methylesterase and rhamnogalacturonase. Among pectinolytic enzymes, pectin lyase is the most important in depolymerization of pectin, since it cleaves internal glycosidic bonds of highly methylated pectins (By similarity).</text>
</comment>
<comment type="catalytic activity">
    <reaction>
        <text>Eliminative cleavage of (1-&gt;4)-alpha-D-galacturonan methyl ester to give oligosaccharides with 4-deoxy-6-O-methyl-alpha-D-galact-4-enuronosyl groups at their non-reducing ends.</text>
        <dbReference type="EC" id="4.2.2.10"/>
    </reaction>
</comment>
<comment type="subcellular location">
    <subcellularLocation>
        <location evidence="5">Secreted</location>
    </subcellularLocation>
</comment>
<comment type="PTM">
    <text>May be O-glycosylated; does not contain N-acetylglucosamine.</text>
</comment>
<comment type="similarity">
    <text evidence="5">Belongs to the polysaccharide lyase 1 family.</text>
</comment>
<evidence type="ECO:0000250" key="1"/>
<evidence type="ECO:0000255" key="2"/>
<evidence type="ECO:0000256" key="3">
    <source>
        <dbReference type="SAM" id="MobiDB-lite"/>
    </source>
</evidence>
<evidence type="ECO:0000269" key="4">
    <source>
    </source>
</evidence>
<evidence type="ECO:0000305" key="5"/>
<protein>
    <recommendedName>
        <fullName>Pectin lyase D</fullName>
        <shortName>PLD</shortName>
        <ecNumber>4.2.2.10</ecNumber>
    </recommendedName>
    <alternativeName>
        <fullName>Pectin lyase I</fullName>
        <shortName>PLI</shortName>
    </alternativeName>
</protein>
<reference key="1">
    <citation type="journal article" date="1990" name="Gene">
        <title>Isolation and structure of the pectin lyase D-encoding gene from Aspergillus niger.</title>
        <authorList>
            <person name="Gysler C."/>
            <person name="Harmsen J.A.M."/>
            <person name="Kester H.C.M."/>
            <person name="Visser J."/>
            <person name="Heim J."/>
        </authorList>
    </citation>
    <scope>NUCLEOTIDE SEQUENCE [GENOMIC DNA]</scope>
    <scope>PROTEIN SEQUENCE OF 20-30 AND 148-167</scope>
    <source>
        <strain>N756</strain>
    </source>
</reference>
<accession>P22864</accession>
<dbReference type="EC" id="4.2.2.10"/>
<dbReference type="EMBL" id="M55657">
    <property type="protein sequence ID" value="AAA32701.1"/>
    <property type="molecule type" value="Genomic_DNA"/>
</dbReference>
<dbReference type="PIR" id="JH0155">
    <property type="entry name" value="JH0155"/>
</dbReference>
<dbReference type="SMR" id="P22864"/>
<dbReference type="CAZy" id="PL1">
    <property type="family name" value="Polysaccharide Lyase Family 1"/>
</dbReference>
<dbReference type="GlyCosmos" id="P22864">
    <property type="glycosylation" value="3 sites, No reported glycans"/>
</dbReference>
<dbReference type="PaxDb" id="5061-CADANGAP00014082"/>
<dbReference type="VEuPathDB" id="FungiDB:An19g00270"/>
<dbReference type="VEuPathDB" id="FungiDB:ASPNIDRAFT2_1136270"/>
<dbReference type="VEuPathDB" id="FungiDB:ATCC64974_62770"/>
<dbReference type="VEuPathDB" id="FungiDB:M747DRAFT_273902"/>
<dbReference type="eggNOG" id="ENOG502QXM6">
    <property type="taxonomic scope" value="Eukaryota"/>
</dbReference>
<dbReference type="BioCyc" id="MetaCyc:MONOMER-20552"/>
<dbReference type="GO" id="GO:0005576">
    <property type="term" value="C:extracellular region"/>
    <property type="evidence" value="ECO:0007669"/>
    <property type="project" value="UniProtKB-SubCell"/>
</dbReference>
<dbReference type="GO" id="GO:0030570">
    <property type="term" value="F:pectate lyase activity"/>
    <property type="evidence" value="ECO:0007669"/>
    <property type="project" value="InterPro"/>
</dbReference>
<dbReference type="GO" id="GO:0047490">
    <property type="term" value="F:pectin lyase activity"/>
    <property type="evidence" value="ECO:0007669"/>
    <property type="project" value="UniProtKB-EC"/>
</dbReference>
<dbReference type="GO" id="GO:0071555">
    <property type="term" value="P:cell wall organization"/>
    <property type="evidence" value="ECO:0007669"/>
    <property type="project" value="UniProtKB-KW"/>
</dbReference>
<dbReference type="GO" id="GO:0000272">
    <property type="term" value="P:polysaccharide catabolic process"/>
    <property type="evidence" value="ECO:0007669"/>
    <property type="project" value="UniProtKB-KW"/>
</dbReference>
<dbReference type="FunFam" id="2.160.20.10:FF:000003">
    <property type="entry name" value="Pectin lyase F"/>
    <property type="match status" value="1"/>
</dbReference>
<dbReference type="Gene3D" id="2.160.20.10">
    <property type="entry name" value="Single-stranded right-handed beta-helix, Pectin lyase-like"/>
    <property type="match status" value="1"/>
</dbReference>
<dbReference type="InterPro" id="IPR002022">
    <property type="entry name" value="Pec_lyase"/>
</dbReference>
<dbReference type="InterPro" id="IPR012334">
    <property type="entry name" value="Pectin_lyas_fold"/>
</dbReference>
<dbReference type="InterPro" id="IPR011050">
    <property type="entry name" value="Pectin_lyase_fold/virulence"/>
</dbReference>
<dbReference type="InterPro" id="IPR045032">
    <property type="entry name" value="PEL"/>
</dbReference>
<dbReference type="PANTHER" id="PTHR31683">
    <property type="entry name" value="PECTATE LYASE 18-RELATED"/>
    <property type="match status" value="1"/>
</dbReference>
<dbReference type="PANTHER" id="PTHR31683:SF16">
    <property type="entry name" value="PECTIN LYASE A-RELATED"/>
    <property type="match status" value="1"/>
</dbReference>
<dbReference type="Pfam" id="PF00544">
    <property type="entry name" value="Pectate_lyase_4"/>
    <property type="match status" value="1"/>
</dbReference>
<dbReference type="SMART" id="SM00656">
    <property type="entry name" value="Amb_all"/>
    <property type="match status" value="1"/>
</dbReference>
<dbReference type="SUPFAM" id="SSF51126">
    <property type="entry name" value="Pectin lyase-like"/>
    <property type="match status" value="1"/>
</dbReference>
<keyword id="KW-0119">Carbohydrate metabolism</keyword>
<keyword id="KW-0961">Cell wall biogenesis/degradation</keyword>
<keyword id="KW-0903">Direct protein sequencing</keyword>
<keyword id="KW-1015">Disulfide bond</keyword>
<keyword id="KW-0325">Glycoprotein</keyword>
<keyword id="KW-0456">Lyase</keyword>
<keyword id="KW-0624">Polysaccharide degradation</keyword>
<keyword id="KW-0964">Secreted</keyword>
<keyword id="KW-0732">Signal</keyword>
<proteinExistence type="evidence at protein level"/>
<sequence>MKYAAALTAIAALAARAAAVGVSGTPVGFASSATGGGDATPVYPTTTDELVSYLGDDEARVIVLSKTFDFTDTEGTTTTTGCAPWGTASGCQLAINKDDWCTNYEPDAPTTTVTYNTAGELGITVNSNKSLIGEGTSGVIKGRGLRMVSGVSNIIIQNIAVTDINPEYVWGGDAITLDEADLVWIDHVTTARIGRQHYVLGTDADSRVSITNNYINGESDYSATCDGHHYWNVYLDGSSDKVTFSGNYLYKTSGRAPKVQDNTYLHIYNNYWENNSGHAFEIGSGGYVLAEGNYFSNVDTVLETDTFEGALFSSDSASSTCESYIGRSCVANVNGGDLTGTSTTVLSNLSGDTLPSADAASTSPASNAGQGNL</sequence>
<organism>
    <name type="scientific">Aspergillus niger</name>
    <dbReference type="NCBI Taxonomy" id="5061"/>
    <lineage>
        <taxon>Eukaryota</taxon>
        <taxon>Fungi</taxon>
        <taxon>Dikarya</taxon>
        <taxon>Ascomycota</taxon>
        <taxon>Pezizomycotina</taxon>
        <taxon>Eurotiomycetes</taxon>
        <taxon>Eurotiomycetidae</taxon>
        <taxon>Eurotiales</taxon>
        <taxon>Aspergillaceae</taxon>
        <taxon>Aspergillus</taxon>
        <taxon>Aspergillus subgen. Circumdati</taxon>
    </lineage>
</organism>